<accession>Q81105</accession>
<gene>
    <name evidence="2" type="primary">C</name>
</gene>
<protein>
    <recommendedName>
        <fullName evidence="2">External core antigen</fullName>
    </recommendedName>
    <alternativeName>
        <fullName evidence="2">HBeAg</fullName>
    </alternativeName>
    <alternativeName>
        <fullName evidence="2">Precore protein</fullName>
    </alternativeName>
    <alternativeName>
        <fullName evidence="2">p25</fullName>
    </alternativeName>
</protein>
<name>HBEAG_HBVA5</name>
<reference key="1">
    <citation type="journal article" date="1988" name="J. Gastroenterol. Hepatol.">
        <title>Nucleotide sequence of a hepatitis B virus genome of subtype adw isolated from a Philippino: comparison with the reported three genomes of the same subtype.</title>
        <authorList>
            <person name="Estacio R.C."/>
            <person name="Chavez C.C."/>
            <person name="Okamoto H."/>
            <person name="Lingao A.L."/>
            <person name="Reyes M.T."/>
            <person name="Domingo E."/>
            <person name="Mayumi M."/>
        </authorList>
    </citation>
    <scope>NUCLEOTIDE SEQUENCE [GENOMIC DNA]</scope>
</reference>
<feature type="signal peptide" evidence="2">
    <location>
        <begin position="1"/>
        <end position="19"/>
    </location>
</feature>
<feature type="chain" id="PRO_5000143378" description="External core antigen" evidence="2">
    <location>
        <begin position="20"/>
        <end position="214"/>
    </location>
</feature>
<feature type="propeptide" id="PRO_0000324693" evidence="1">
    <location>
        <begin position="186"/>
        <end position="214"/>
    </location>
</feature>
<feature type="repeat" description="1; half-length">
    <location>
        <begin position="186"/>
        <end position="192"/>
    </location>
</feature>
<feature type="repeat" description="2">
    <location>
        <begin position="193"/>
        <end position="200"/>
    </location>
</feature>
<feature type="repeat" description="3">
    <location>
        <begin position="201"/>
        <end position="208"/>
    </location>
</feature>
<feature type="region of interest" description="HBEAG" evidence="2">
    <location>
        <begin position="25"/>
        <end position="27"/>
    </location>
</feature>
<feature type="region of interest" description="Disordered" evidence="3">
    <location>
        <begin position="165"/>
        <end position="214"/>
    </location>
</feature>
<feature type="region of interest" description="3 X 8 AA repeats of S-P-R-R-R-R-S-Q">
    <location>
        <begin position="186"/>
        <end position="208"/>
    </location>
</feature>
<feature type="compositionally biased region" description="Basic residues" evidence="3">
    <location>
        <begin position="178"/>
        <end position="207"/>
    </location>
</feature>
<feature type="site" description="Cleavage; by host" evidence="2">
    <location>
        <begin position="185"/>
        <end position="186"/>
    </location>
</feature>
<feature type="disulfide bond" description="Interchain" evidence="2">
    <location>
        <position position="77"/>
    </location>
</feature>
<feature type="disulfide bond" description="Interchain" evidence="2">
    <location>
        <position position="90"/>
    </location>
</feature>
<dbReference type="EMBL" id="M57663">
    <property type="protein sequence ID" value="AAA69681.2"/>
    <property type="molecule type" value="Genomic_DNA"/>
</dbReference>
<dbReference type="PIR" id="C94409">
    <property type="entry name" value="NKVLA3"/>
</dbReference>
<dbReference type="PIR" id="S33686">
    <property type="entry name" value="S33686"/>
</dbReference>
<dbReference type="Proteomes" id="UP000007908">
    <property type="component" value="Genome"/>
</dbReference>
<dbReference type="GO" id="GO:0005576">
    <property type="term" value="C:extracellular region"/>
    <property type="evidence" value="ECO:0007669"/>
    <property type="project" value="UniProtKB-SubCell"/>
</dbReference>
<dbReference type="GO" id="GO:0043657">
    <property type="term" value="C:host cell"/>
    <property type="evidence" value="ECO:0007669"/>
    <property type="project" value="GOC"/>
</dbReference>
<dbReference type="GO" id="GO:0030430">
    <property type="term" value="C:host cell cytoplasm"/>
    <property type="evidence" value="ECO:0007669"/>
    <property type="project" value="UniProtKB-UniRule"/>
</dbReference>
<dbReference type="GO" id="GO:0042025">
    <property type="term" value="C:host cell nucleus"/>
    <property type="evidence" value="ECO:0007669"/>
    <property type="project" value="UniProtKB-SubCell"/>
</dbReference>
<dbReference type="GO" id="GO:0039619">
    <property type="term" value="C:T=4 icosahedral viral capsid"/>
    <property type="evidence" value="ECO:0007669"/>
    <property type="project" value="UniProtKB-UniRule"/>
</dbReference>
<dbReference type="GO" id="GO:0003677">
    <property type="term" value="F:DNA binding"/>
    <property type="evidence" value="ECO:0007669"/>
    <property type="project" value="UniProtKB-UniRule"/>
</dbReference>
<dbReference type="GO" id="GO:0003723">
    <property type="term" value="F:RNA binding"/>
    <property type="evidence" value="ECO:0007669"/>
    <property type="project" value="UniProtKB-UniRule"/>
</dbReference>
<dbReference type="GO" id="GO:0005198">
    <property type="term" value="F:structural molecule activity"/>
    <property type="evidence" value="ECO:0007669"/>
    <property type="project" value="UniProtKB-UniRule"/>
</dbReference>
<dbReference type="GO" id="GO:0075521">
    <property type="term" value="P:microtubule-dependent intracellular transport of viral material towards nucleus"/>
    <property type="evidence" value="ECO:0007669"/>
    <property type="project" value="UniProtKB-UniRule"/>
</dbReference>
<dbReference type="GO" id="GO:0046718">
    <property type="term" value="P:symbiont entry into host cell"/>
    <property type="evidence" value="ECO:0007669"/>
    <property type="project" value="UniProtKB-UniRule"/>
</dbReference>
<dbReference type="GO" id="GO:0075732">
    <property type="term" value="P:viral penetration into host nucleus"/>
    <property type="evidence" value="ECO:0007669"/>
    <property type="project" value="UniProtKB-UniRule"/>
</dbReference>
<dbReference type="FunFam" id="1.10.4090.10:FF:000001">
    <property type="entry name" value="Capsid protein"/>
    <property type="match status" value="1"/>
</dbReference>
<dbReference type="Gene3D" id="1.10.4090.10">
    <property type="entry name" value="Viral capsid, core domain supefamily, Hepatitis B virus"/>
    <property type="match status" value="1"/>
</dbReference>
<dbReference type="HAMAP" id="MF_04076">
    <property type="entry name" value="HBV_HBEAG"/>
    <property type="match status" value="1"/>
</dbReference>
<dbReference type="InterPro" id="IPR013195">
    <property type="entry name" value="Hepatitis_B_virus_capsid_N"/>
</dbReference>
<dbReference type="InterPro" id="IPR002006">
    <property type="entry name" value="Hepatitis_core"/>
</dbReference>
<dbReference type="InterPro" id="IPR036459">
    <property type="entry name" value="Viral_capsid_core_dom_sf_HBV"/>
</dbReference>
<dbReference type="Pfam" id="PF08290">
    <property type="entry name" value="Hep_core_N"/>
    <property type="match status" value="1"/>
</dbReference>
<dbReference type="Pfam" id="PF00906">
    <property type="entry name" value="Hepatitis_core"/>
    <property type="match status" value="2"/>
</dbReference>
<dbReference type="SUPFAM" id="SSF47852">
    <property type="entry name" value="Hepatitis B viral capsid (hbcag)"/>
    <property type="match status" value="1"/>
</dbReference>
<comment type="function">
    <text evidence="2">May regulate immune response to the intracellular capsid in acting as a T-cell tolerogen, by having an immunoregulatory effect which prevents destruction of infected cells by cytotoxic T-cells. This immune regulation may predispose to chronicity during perinatal infections and prevent severe liver injury during adult infections.</text>
</comment>
<comment type="subunit">
    <text evidence="2">Homodimerizes.</text>
</comment>
<comment type="subcellular location">
    <subcellularLocation>
        <location evidence="2">Secreted</location>
    </subcellularLocation>
    <subcellularLocation>
        <location evidence="2">Host nucleus</location>
    </subcellularLocation>
</comment>
<comment type="alternative products">
    <event type="alternative initiation"/>
    <isoform>
        <id>Q81105-1</id>
        <name>External core antigen</name>
        <sequence type="displayed"/>
    </isoform>
    <isoform>
        <id>P0C694-1</id>
        <name>Capsid protein</name>
        <sequence type="external"/>
    </isoform>
</comment>
<comment type="PTM">
    <text evidence="2">Phosphorylated.</text>
</comment>
<comment type="PTM">
    <text evidence="2">Cleaved by host furin.</text>
</comment>
<comment type="similarity">
    <text evidence="2">Belongs to the orthohepadnavirus precore antigen family.</text>
</comment>
<evidence type="ECO:0000250" key="1"/>
<evidence type="ECO:0000255" key="2">
    <source>
        <dbReference type="HAMAP-Rule" id="MF_04076"/>
    </source>
</evidence>
<evidence type="ECO:0000256" key="3">
    <source>
        <dbReference type="SAM" id="MobiDB-lite"/>
    </source>
</evidence>
<organismHost>
    <name type="scientific">Homo sapiens</name>
    <name type="common">Human</name>
    <dbReference type="NCBI Taxonomy" id="9606"/>
</organismHost>
<organismHost>
    <name type="scientific">Pan troglodytes</name>
    <name type="common">Chimpanzee</name>
    <dbReference type="NCBI Taxonomy" id="9598"/>
</organismHost>
<proteinExistence type="inferred from homology"/>
<sequence>MQLFHLCLIISCTCPTFQASKLCLGWLWGMDIDPYKEFGATVELLSFLPSDFFPSVRDLXDTASALYREALESPEHCSPHHTALRQAILCWGKLMTLATWVGNNLEDPASRDLVVNYVNTNMGLKIRQLLWFHISCLTFGRETVLEYLVSFGVWIRTPPAYRPPNAPILSTLPETTVVRRRDRGRSPRRRTPSPRRRRSQSPRRRRSQSRESQC</sequence>
<keyword id="KW-0024">Alternative initiation</keyword>
<keyword id="KW-1015">Disulfide bond</keyword>
<keyword id="KW-1048">Host nucleus</keyword>
<keyword id="KW-0945">Host-virus interaction</keyword>
<keyword id="KW-0677">Repeat</keyword>
<keyword id="KW-0964">Secreted</keyword>
<keyword id="KW-0732">Signal</keyword>
<keyword id="KW-0899">Viral immunoevasion</keyword>
<organism>
    <name type="scientific">Hepatitis B virus genotype A1 subtype adw (isolate Philippines/pFDW294/1988)</name>
    <name type="common">HBV-A</name>
    <dbReference type="NCBI Taxonomy" id="31514"/>
    <lineage>
        <taxon>Viruses</taxon>
        <taxon>Riboviria</taxon>
        <taxon>Pararnavirae</taxon>
        <taxon>Artverviricota</taxon>
        <taxon>Revtraviricetes</taxon>
        <taxon>Blubervirales</taxon>
        <taxon>Hepadnaviridae</taxon>
        <taxon>Orthohepadnavirus</taxon>
        <taxon>Hepatitis B virus</taxon>
    </lineage>
</organism>